<comment type="function">
    <text evidence="1">Catalyzes the release of L-lysine from [LysW]-gamma-L-lysine and the release of L-ornithine from [LysW]-L-ornithine.</text>
</comment>
<comment type="catalytic activity">
    <reaction evidence="1">
        <text>[amino-group carrier protein]-C-terminal-gamma-(L-lysyl)-L-glutamate + H2O = [amino-group carrier protein]-C-terminal-L-glutamate + L-lysine</text>
        <dbReference type="Rhea" id="RHEA:48684"/>
        <dbReference type="Rhea" id="RHEA-COMP:9693"/>
        <dbReference type="Rhea" id="RHEA-COMP:9715"/>
        <dbReference type="ChEBI" id="CHEBI:15377"/>
        <dbReference type="ChEBI" id="CHEBI:32551"/>
        <dbReference type="ChEBI" id="CHEBI:78525"/>
        <dbReference type="ChEBI" id="CHEBI:78526"/>
        <dbReference type="EC" id="3.5.1.130"/>
    </reaction>
</comment>
<comment type="catalytic activity">
    <reaction evidence="1">
        <text>[amino-group carrier protein]-C-terminal-gamma-(L-ornithyl)-L-glutamate + H2O = [amino-group carrier protein]-C-terminal-L-glutamate + L-ornithine</text>
        <dbReference type="Rhea" id="RHEA:52676"/>
        <dbReference type="Rhea" id="RHEA-COMP:9693"/>
        <dbReference type="Rhea" id="RHEA-COMP:13328"/>
        <dbReference type="ChEBI" id="CHEBI:15377"/>
        <dbReference type="ChEBI" id="CHEBI:46911"/>
        <dbReference type="ChEBI" id="CHEBI:78525"/>
        <dbReference type="ChEBI" id="CHEBI:136763"/>
        <dbReference type="EC" id="3.5.1.132"/>
    </reaction>
</comment>
<comment type="cofactor">
    <cofactor evidence="1">
        <name>Zn(2+)</name>
        <dbReference type="ChEBI" id="CHEBI:29105"/>
    </cofactor>
    <cofactor evidence="1">
        <name>Co(2+)</name>
        <dbReference type="ChEBI" id="CHEBI:48828"/>
    </cofactor>
    <text evidence="1">Binds 2 Zn(2+) or Co(2+) ions per subunit.</text>
</comment>
<comment type="pathway">
    <text evidence="1">Amino-acid biosynthesis; L-lysine biosynthesis via AAA pathway; L-lysine from L-alpha-aminoadipate (Thermus route): step 5/5.</text>
</comment>
<comment type="pathway">
    <text evidence="1">Amino-acid biosynthesis; L-arginine biosynthesis.</text>
</comment>
<comment type="subcellular location">
    <subcellularLocation>
        <location evidence="1">Cytoplasm</location>
    </subcellularLocation>
</comment>
<comment type="similarity">
    <text evidence="1">Belongs to the peptidase M20A family. LysK subfamily.</text>
</comment>
<keyword id="KW-0028">Amino-acid biosynthesis</keyword>
<keyword id="KW-0055">Arginine biosynthesis</keyword>
<keyword id="KW-0170">Cobalt</keyword>
<keyword id="KW-0963">Cytoplasm</keyword>
<keyword id="KW-0378">Hydrolase</keyword>
<keyword id="KW-0457">Lysine biosynthesis</keyword>
<keyword id="KW-0479">Metal-binding</keyword>
<keyword id="KW-0862">Zinc</keyword>
<sequence>MQQEKELVKQKAKELLLDLLSIYTPSKNETNATKFFEKISNEFNLKLEILPDSNSFILGEGEILLASHVDTVPGYIEPKIENEVIYGRGAVDAKGPLISMIIAAWLLNEKGIKVMVSGLADEESTSIGAKELTLKNFNFKHIIVGEPSNGTDIVVEYRGSIQLDIMCKSTPEHSSSAKSNLIVDISKKIIEVYKQPENYDKPSIVPTIIRAGESYNVTPAKLYLHFDVRYAINNKRDDLINEIKDKFQECGLKIVDETPPVKVSINNPVVKSLTRALLKQNIKPRLVRKAGTSDMNILQKITTSIATYGPGNSMLEHTNQEKITLDEIYIGVKTYMLAIEELWQKS</sequence>
<evidence type="ECO:0000255" key="1">
    <source>
        <dbReference type="HAMAP-Rule" id="MF_01120"/>
    </source>
</evidence>
<protein>
    <recommendedName>
        <fullName evidence="1">[LysW]-lysine/[LysW]-ornithine hydrolase</fullName>
        <ecNumber evidence="1">3.5.1.130</ecNumber>
        <ecNumber evidence="1">3.5.1.132</ecNumber>
    </recommendedName>
</protein>
<gene>
    <name evidence="1" type="primary">lysK</name>
    <name type="ordered locus">M164_1984</name>
</gene>
<feature type="chain" id="PRO_1000213614" description="[LysW]-lysine/[LysW]-ornithine hydrolase">
    <location>
        <begin position="1"/>
        <end position="346"/>
    </location>
</feature>
<feature type="active site" evidence="1">
    <location>
        <position position="70"/>
    </location>
</feature>
<feature type="active site" description="Proton acceptor" evidence="1">
    <location>
        <position position="122"/>
    </location>
</feature>
<feature type="binding site" evidence="1">
    <location>
        <position position="68"/>
    </location>
    <ligand>
        <name>Zn(2+)</name>
        <dbReference type="ChEBI" id="CHEBI:29105"/>
        <label>1</label>
    </ligand>
</feature>
<feature type="binding site" evidence="1">
    <location>
        <position position="92"/>
    </location>
    <ligand>
        <name>Zn(2+)</name>
        <dbReference type="ChEBI" id="CHEBI:29105"/>
        <label>1</label>
    </ligand>
</feature>
<feature type="binding site" evidence="1">
    <location>
        <position position="92"/>
    </location>
    <ligand>
        <name>Zn(2+)</name>
        <dbReference type="ChEBI" id="CHEBI:29105"/>
        <label>2</label>
    </ligand>
</feature>
<feature type="binding site" evidence="1">
    <location>
        <position position="123"/>
    </location>
    <ligand>
        <name>Zn(2+)</name>
        <dbReference type="ChEBI" id="CHEBI:29105"/>
        <label>2</label>
    </ligand>
</feature>
<feature type="binding site" evidence="1">
    <location>
        <position position="146"/>
    </location>
    <ligand>
        <name>Zn(2+)</name>
        <dbReference type="ChEBI" id="CHEBI:29105"/>
        <label>1</label>
    </ligand>
</feature>
<feature type="binding site" evidence="1">
    <location>
        <position position="317"/>
    </location>
    <ligand>
        <name>Zn(2+)</name>
        <dbReference type="ChEBI" id="CHEBI:29105"/>
        <label>2</label>
    </ligand>
</feature>
<reference key="1">
    <citation type="journal article" date="2009" name="Proc. Natl. Acad. Sci. U.S.A.">
        <title>Biogeography of the Sulfolobus islandicus pan-genome.</title>
        <authorList>
            <person name="Reno M.L."/>
            <person name="Held N.L."/>
            <person name="Fields C.J."/>
            <person name="Burke P.V."/>
            <person name="Whitaker R.J."/>
        </authorList>
    </citation>
    <scope>NUCLEOTIDE SEQUENCE [LARGE SCALE GENOMIC DNA]</scope>
    <source>
        <strain>M.16.4 / Kamchatka #3</strain>
    </source>
</reference>
<dbReference type="EC" id="3.5.1.130" evidence="1"/>
<dbReference type="EC" id="3.5.1.132" evidence="1"/>
<dbReference type="EMBL" id="CP001402">
    <property type="protein sequence ID" value="ACR42588.1"/>
    <property type="molecule type" value="Genomic_DNA"/>
</dbReference>
<dbReference type="RefSeq" id="WP_012736078.1">
    <property type="nucleotide sequence ID" value="NC_012726.1"/>
</dbReference>
<dbReference type="SMR" id="C4KJ24"/>
<dbReference type="MEROPS" id="M20.975"/>
<dbReference type="KEGG" id="sid:M164_1984"/>
<dbReference type="HOGENOM" id="CLU_021802_2_0_2"/>
<dbReference type="UniPathway" id="UPA00033">
    <property type="reaction ID" value="UER00039"/>
</dbReference>
<dbReference type="UniPathway" id="UPA00068"/>
<dbReference type="Proteomes" id="UP000001479">
    <property type="component" value="Chromosome"/>
</dbReference>
<dbReference type="GO" id="GO:0005737">
    <property type="term" value="C:cytoplasm"/>
    <property type="evidence" value="ECO:0007669"/>
    <property type="project" value="UniProtKB-SubCell"/>
</dbReference>
<dbReference type="GO" id="GO:0050897">
    <property type="term" value="F:cobalt ion binding"/>
    <property type="evidence" value="ECO:0007669"/>
    <property type="project" value="UniProtKB-UniRule"/>
</dbReference>
<dbReference type="GO" id="GO:0016811">
    <property type="term" value="F:hydrolase activity, acting on carbon-nitrogen (but not peptide) bonds, in linear amides"/>
    <property type="evidence" value="ECO:0007669"/>
    <property type="project" value="UniProtKB-UniRule"/>
</dbReference>
<dbReference type="GO" id="GO:0008270">
    <property type="term" value="F:zinc ion binding"/>
    <property type="evidence" value="ECO:0007669"/>
    <property type="project" value="UniProtKB-UniRule"/>
</dbReference>
<dbReference type="GO" id="GO:0042450">
    <property type="term" value="P:arginine biosynthetic process via ornithine"/>
    <property type="evidence" value="ECO:0007669"/>
    <property type="project" value="UniProtKB-UniRule"/>
</dbReference>
<dbReference type="GO" id="GO:0006526">
    <property type="term" value="P:L-arginine biosynthetic process"/>
    <property type="evidence" value="ECO:0007669"/>
    <property type="project" value="UniProtKB-UniPathway"/>
</dbReference>
<dbReference type="GO" id="GO:0019878">
    <property type="term" value="P:lysine biosynthetic process via aminoadipic acid"/>
    <property type="evidence" value="ECO:0007669"/>
    <property type="project" value="UniProtKB-UniRule"/>
</dbReference>
<dbReference type="CDD" id="cd05653">
    <property type="entry name" value="M20_ArgE_LysK"/>
    <property type="match status" value="1"/>
</dbReference>
<dbReference type="Gene3D" id="3.30.70.360">
    <property type="match status" value="1"/>
</dbReference>
<dbReference type="Gene3D" id="3.40.630.10">
    <property type="entry name" value="Zn peptidases"/>
    <property type="match status" value="1"/>
</dbReference>
<dbReference type="HAMAP" id="MF_01120">
    <property type="entry name" value="LysK"/>
    <property type="match status" value="1"/>
</dbReference>
<dbReference type="InterPro" id="IPR001261">
    <property type="entry name" value="ArgE/DapE_CS"/>
</dbReference>
<dbReference type="InterPro" id="IPR036264">
    <property type="entry name" value="Bact_exopeptidase_dim_dom"/>
</dbReference>
<dbReference type="InterPro" id="IPR010175">
    <property type="entry name" value="LysK"/>
</dbReference>
<dbReference type="InterPro" id="IPR002933">
    <property type="entry name" value="Peptidase_M20"/>
</dbReference>
<dbReference type="InterPro" id="IPR011650">
    <property type="entry name" value="Peptidase_M20_dimer"/>
</dbReference>
<dbReference type="InterPro" id="IPR050072">
    <property type="entry name" value="Peptidase_M20A"/>
</dbReference>
<dbReference type="NCBIfam" id="TIGR01902">
    <property type="entry name" value="dapE-lys-deAc"/>
    <property type="match status" value="1"/>
</dbReference>
<dbReference type="NCBIfam" id="NF001747">
    <property type="entry name" value="PRK00466.1"/>
    <property type="match status" value="1"/>
</dbReference>
<dbReference type="PANTHER" id="PTHR43808:SF28">
    <property type="entry name" value="[LYSW]-LYSINE_[LYSW]-ORNITHINE HYDROLASE"/>
    <property type="match status" value="1"/>
</dbReference>
<dbReference type="PANTHER" id="PTHR43808">
    <property type="entry name" value="ACETYLORNITHINE DEACETYLASE"/>
    <property type="match status" value="1"/>
</dbReference>
<dbReference type="Pfam" id="PF07687">
    <property type="entry name" value="M20_dimer"/>
    <property type="match status" value="1"/>
</dbReference>
<dbReference type="Pfam" id="PF01546">
    <property type="entry name" value="Peptidase_M20"/>
    <property type="match status" value="1"/>
</dbReference>
<dbReference type="SUPFAM" id="SSF55031">
    <property type="entry name" value="Bacterial exopeptidase dimerisation domain"/>
    <property type="match status" value="1"/>
</dbReference>
<dbReference type="SUPFAM" id="SSF53187">
    <property type="entry name" value="Zn-dependent exopeptidases"/>
    <property type="match status" value="1"/>
</dbReference>
<dbReference type="PROSITE" id="PS00758">
    <property type="entry name" value="ARGE_DAPE_CPG2_1"/>
    <property type="match status" value="1"/>
</dbReference>
<accession>C4KJ24</accession>
<organism>
    <name type="scientific">Saccharolobus islandicus (strain M.16.4 / Kamchatka #3)</name>
    <name type="common">Sulfolobus islandicus</name>
    <dbReference type="NCBI Taxonomy" id="426118"/>
    <lineage>
        <taxon>Archaea</taxon>
        <taxon>Thermoproteota</taxon>
        <taxon>Thermoprotei</taxon>
        <taxon>Sulfolobales</taxon>
        <taxon>Sulfolobaceae</taxon>
        <taxon>Saccharolobus</taxon>
    </lineage>
</organism>
<name>LYSK_SACI6</name>
<proteinExistence type="inferred from homology"/>